<accession>A6X3F1</accession>
<comment type="function">
    <text evidence="1">Transfers the gamma-phosphate of ATP to the 4'-position of a tetraacyldisaccharide 1-phosphate intermediate (termed DS-1-P) to form tetraacyldisaccharide 1,4'-bis-phosphate (lipid IVA).</text>
</comment>
<comment type="catalytic activity">
    <reaction evidence="1">
        <text>a lipid A disaccharide + ATP = a lipid IVA + ADP + H(+)</text>
        <dbReference type="Rhea" id="RHEA:67840"/>
        <dbReference type="ChEBI" id="CHEBI:15378"/>
        <dbReference type="ChEBI" id="CHEBI:30616"/>
        <dbReference type="ChEBI" id="CHEBI:176343"/>
        <dbReference type="ChEBI" id="CHEBI:176425"/>
        <dbReference type="ChEBI" id="CHEBI:456216"/>
        <dbReference type="EC" id="2.7.1.130"/>
    </reaction>
</comment>
<comment type="pathway">
    <text evidence="1">Glycolipid biosynthesis; lipid IV(A) biosynthesis; lipid IV(A) from (3R)-3-hydroxytetradecanoyl-[acyl-carrier-protein] and UDP-N-acetyl-alpha-D-glucosamine: step 6/6.</text>
</comment>
<comment type="similarity">
    <text evidence="1">Belongs to the LpxK family.</text>
</comment>
<reference key="1">
    <citation type="journal article" date="2011" name="J. Bacteriol.">
        <title>Genome of Ochrobactrum anthropi ATCC 49188 T, a versatile opportunistic pathogen and symbiont of several eukaryotic hosts.</title>
        <authorList>
            <person name="Chain P.S."/>
            <person name="Lang D.M."/>
            <person name="Comerci D.J."/>
            <person name="Malfatti S.A."/>
            <person name="Vergez L.M."/>
            <person name="Shin M."/>
            <person name="Ugalde R.A."/>
            <person name="Garcia E."/>
            <person name="Tolmasky M.E."/>
        </authorList>
    </citation>
    <scope>NUCLEOTIDE SEQUENCE [LARGE SCALE GENOMIC DNA]</scope>
    <source>
        <strain>ATCC 49188 / DSM 6882 / CCUG 24695 / JCM 21032 / LMG 3331 / NBRC 15819 / NCTC 12168 / Alc 37</strain>
    </source>
</reference>
<evidence type="ECO:0000255" key="1">
    <source>
        <dbReference type="HAMAP-Rule" id="MF_00409"/>
    </source>
</evidence>
<name>LPXK_BRUA4</name>
<dbReference type="EC" id="2.7.1.130" evidence="1"/>
<dbReference type="EMBL" id="CP000759">
    <property type="protein sequence ID" value="ABS15755.1"/>
    <property type="molecule type" value="Genomic_DNA"/>
</dbReference>
<dbReference type="RefSeq" id="WP_011982763.1">
    <property type="nucleotide sequence ID" value="NC_009668.1"/>
</dbReference>
<dbReference type="SMR" id="A6X3F1"/>
<dbReference type="STRING" id="439375.Oant_3047"/>
<dbReference type="KEGG" id="oan:Oant_3047"/>
<dbReference type="PATRIC" id="fig|439375.7.peg.3198"/>
<dbReference type="eggNOG" id="COG1663">
    <property type="taxonomic scope" value="Bacteria"/>
</dbReference>
<dbReference type="HOGENOM" id="CLU_038816_0_0_5"/>
<dbReference type="PhylomeDB" id="A6X3F1"/>
<dbReference type="UniPathway" id="UPA00359">
    <property type="reaction ID" value="UER00482"/>
</dbReference>
<dbReference type="Proteomes" id="UP000002301">
    <property type="component" value="Chromosome 2"/>
</dbReference>
<dbReference type="GO" id="GO:0005886">
    <property type="term" value="C:plasma membrane"/>
    <property type="evidence" value="ECO:0007669"/>
    <property type="project" value="TreeGrafter"/>
</dbReference>
<dbReference type="GO" id="GO:0005524">
    <property type="term" value="F:ATP binding"/>
    <property type="evidence" value="ECO:0007669"/>
    <property type="project" value="UniProtKB-UniRule"/>
</dbReference>
<dbReference type="GO" id="GO:0009029">
    <property type="term" value="F:tetraacyldisaccharide 4'-kinase activity"/>
    <property type="evidence" value="ECO:0007669"/>
    <property type="project" value="UniProtKB-UniRule"/>
</dbReference>
<dbReference type="GO" id="GO:0009245">
    <property type="term" value="P:lipid A biosynthetic process"/>
    <property type="evidence" value="ECO:0007669"/>
    <property type="project" value="UniProtKB-UniRule"/>
</dbReference>
<dbReference type="GO" id="GO:0009244">
    <property type="term" value="P:lipopolysaccharide core region biosynthetic process"/>
    <property type="evidence" value="ECO:0007669"/>
    <property type="project" value="TreeGrafter"/>
</dbReference>
<dbReference type="HAMAP" id="MF_00409">
    <property type="entry name" value="LpxK"/>
    <property type="match status" value="1"/>
</dbReference>
<dbReference type="InterPro" id="IPR003758">
    <property type="entry name" value="LpxK"/>
</dbReference>
<dbReference type="InterPro" id="IPR027417">
    <property type="entry name" value="P-loop_NTPase"/>
</dbReference>
<dbReference type="NCBIfam" id="TIGR00682">
    <property type="entry name" value="lpxK"/>
    <property type="match status" value="1"/>
</dbReference>
<dbReference type="PANTHER" id="PTHR42724">
    <property type="entry name" value="TETRAACYLDISACCHARIDE 4'-KINASE"/>
    <property type="match status" value="1"/>
</dbReference>
<dbReference type="PANTHER" id="PTHR42724:SF1">
    <property type="entry name" value="TETRAACYLDISACCHARIDE 4'-KINASE, MITOCHONDRIAL-RELATED"/>
    <property type="match status" value="1"/>
</dbReference>
<dbReference type="Pfam" id="PF02606">
    <property type="entry name" value="LpxK"/>
    <property type="match status" value="1"/>
</dbReference>
<dbReference type="SUPFAM" id="SSF52540">
    <property type="entry name" value="P-loop containing nucleoside triphosphate hydrolases"/>
    <property type="match status" value="1"/>
</dbReference>
<organism>
    <name type="scientific">Brucella anthropi (strain ATCC 49188 / DSM 6882 / CCUG 24695 / JCM 21032 / LMG 3331 / NBRC 15819 / NCTC 12168 / Alc 37)</name>
    <name type="common">Ochrobactrum anthropi</name>
    <dbReference type="NCBI Taxonomy" id="439375"/>
    <lineage>
        <taxon>Bacteria</taxon>
        <taxon>Pseudomonadati</taxon>
        <taxon>Pseudomonadota</taxon>
        <taxon>Alphaproteobacteria</taxon>
        <taxon>Hyphomicrobiales</taxon>
        <taxon>Brucellaceae</taxon>
        <taxon>Brucella/Ochrobactrum group</taxon>
        <taxon>Brucella</taxon>
    </lineage>
</organism>
<gene>
    <name evidence="1" type="primary">lpxK</name>
    <name type="ordered locus">Oant_3047</name>
</gene>
<keyword id="KW-0067">ATP-binding</keyword>
<keyword id="KW-0418">Kinase</keyword>
<keyword id="KW-0441">Lipid A biosynthesis</keyword>
<keyword id="KW-0444">Lipid biosynthesis</keyword>
<keyword id="KW-0443">Lipid metabolism</keyword>
<keyword id="KW-0547">Nucleotide-binding</keyword>
<keyword id="KW-1185">Reference proteome</keyword>
<keyword id="KW-0808">Transferase</keyword>
<feature type="chain" id="PRO_1000049901" description="Tetraacyldisaccharide 4'-kinase">
    <location>
        <begin position="1"/>
        <end position="341"/>
    </location>
</feature>
<feature type="binding site" evidence="1">
    <location>
        <begin position="54"/>
        <end position="61"/>
    </location>
    <ligand>
        <name>ATP</name>
        <dbReference type="ChEBI" id="CHEBI:30616"/>
    </ligand>
</feature>
<protein>
    <recommendedName>
        <fullName evidence="1">Tetraacyldisaccharide 4'-kinase</fullName>
        <ecNumber evidence="1">2.7.1.130</ecNumber>
    </recommendedName>
    <alternativeName>
        <fullName evidence="1">Lipid A 4'-kinase</fullName>
    </alternativeName>
</protein>
<sequence length="341" mass="36506">MVSEAPPFWWDKPDWRALSLAPAAWLYGAVAGRRLLKAEPPKISLPVLCVGNFTVGGAGKTPTAIAFSAGAKARGLNPGIVSRGYGGAYKGLHVVDPAHDSARYVGDEPLLLARHASVALCPDRLKAARHLQALGCDFIIMDDGFQSARLFADFSLLVVDAARGIGNGKVIPAGPLRAPLTDQMRKTDALLRIGKGDGADFVIRQTARAGRPIYEARLKPSSTTPIAGNRWLAFAGIGNPEKFYASVAEAGGEIVETCSFPDHHSFASDDIRNLTDTARRQGLGLITTAKDQVRLATMIGVPAGFLTKLAVLNVDLKFDRNDALDHILDTVIERFKSRVTS</sequence>
<proteinExistence type="inferred from homology"/>